<reference key="1">
    <citation type="journal article" date="2008" name="PLoS ONE">
        <title>Survival in nuclear waste, extreme resistance, and potential applications gleaned from the genome sequence of Kineococcus radiotolerans SRS30216.</title>
        <authorList>
            <person name="Bagwell C.E."/>
            <person name="Bhat S."/>
            <person name="Hawkins G.M."/>
            <person name="Smith B.W."/>
            <person name="Biswas T."/>
            <person name="Hoover T.R."/>
            <person name="Saunders E."/>
            <person name="Han C.S."/>
            <person name="Tsodikov O.V."/>
            <person name="Shimkets L.J."/>
        </authorList>
    </citation>
    <scope>NUCLEOTIDE SEQUENCE [LARGE SCALE GENOMIC DNA]</scope>
    <source>
        <strain>ATCC BAA-149 / DSM 14245 / SRS30216</strain>
    </source>
</reference>
<keyword id="KW-0488">Methylation</keyword>
<keyword id="KW-1185">Reference proteome</keyword>
<keyword id="KW-0687">Ribonucleoprotein</keyword>
<keyword id="KW-0689">Ribosomal protein</keyword>
<keyword id="KW-0694">RNA-binding</keyword>
<keyword id="KW-0699">rRNA-binding</keyword>
<comment type="function">
    <text evidence="1">Forms part of the ribosomal stalk which helps the ribosome interact with GTP-bound translation factors.</text>
</comment>
<comment type="subunit">
    <text evidence="1">Part of the ribosomal stalk of the 50S ribosomal subunit. Interacts with L10 and the large rRNA to form the base of the stalk. L10 forms an elongated spine to which L12 dimers bind in a sequential fashion forming a multimeric L10(L12)X complex.</text>
</comment>
<comment type="PTM">
    <text evidence="1">One or more lysine residues are methylated.</text>
</comment>
<comment type="similarity">
    <text evidence="1">Belongs to the universal ribosomal protein uL11 family.</text>
</comment>
<name>RL11_KINRD</name>
<protein>
    <recommendedName>
        <fullName evidence="1">Large ribosomal subunit protein uL11</fullName>
    </recommendedName>
    <alternativeName>
        <fullName evidence="2">50S ribosomal protein L11</fullName>
    </alternativeName>
</protein>
<feature type="chain" id="PRO_1000083387" description="Large ribosomal subunit protein uL11">
    <location>
        <begin position="1"/>
        <end position="143"/>
    </location>
</feature>
<organism>
    <name type="scientific">Kineococcus radiotolerans (strain ATCC BAA-149 / DSM 14245 / SRS30216)</name>
    <dbReference type="NCBI Taxonomy" id="266940"/>
    <lineage>
        <taxon>Bacteria</taxon>
        <taxon>Bacillati</taxon>
        <taxon>Actinomycetota</taxon>
        <taxon>Actinomycetes</taxon>
        <taxon>Kineosporiales</taxon>
        <taxon>Kineosporiaceae</taxon>
        <taxon>Kineococcus</taxon>
    </lineage>
</organism>
<dbReference type="EMBL" id="CP000750">
    <property type="protein sequence ID" value="ABS02165.1"/>
    <property type="molecule type" value="Genomic_DNA"/>
</dbReference>
<dbReference type="RefSeq" id="WP_012084993.1">
    <property type="nucleotide sequence ID" value="NC_009664.2"/>
</dbReference>
<dbReference type="SMR" id="A6W5S6"/>
<dbReference type="STRING" id="266940.Krad_0676"/>
<dbReference type="KEGG" id="kra:Krad_0676"/>
<dbReference type="eggNOG" id="COG0080">
    <property type="taxonomic scope" value="Bacteria"/>
</dbReference>
<dbReference type="HOGENOM" id="CLU_074237_2_1_11"/>
<dbReference type="OrthoDB" id="9802408at2"/>
<dbReference type="Proteomes" id="UP000001116">
    <property type="component" value="Chromosome"/>
</dbReference>
<dbReference type="GO" id="GO:0022625">
    <property type="term" value="C:cytosolic large ribosomal subunit"/>
    <property type="evidence" value="ECO:0007669"/>
    <property type="project" value="TreeGrafter"/>
</dbReference>
<dbReference type="GO" id="GO:0070180">
    <property type="term" value="F:large ribosomal subunit rRNA binding"/>
    <property type="evidence" value="ECO:0007669"/>
    <property type="project" value="UniProtKB-UniRule"/>
</dbReference>
<dbReference type="GO" id="GO:0003735">
    <property type="term" value="F:structural constituent of ribosome"/>
    <property type="evidence" value="ECO:0007669"/>
    <property type="project" value="InterPro"/>
</dbReference>
<dbReference type="GO" id="GO:0006412">
    <property type="term" value="P:translation"/>
    <property type="evidence" value="ECO:0007669"/>
    <property type="project" value="UniProtKB-UniRule"/>
</dbReference>
<dbReference type="CDD" id="cd00349">
    <property type="entry name" value="Ribosomal_L11"/>
    <property type="match status" value="1"/>
</dbReference>
<dbReference type="FunFam" id="1.10.10.250:FF:000001">
    <property type="entry name" value="50S ribosomal protein L11"/>
    <property type="match status" value="1"/>
</dbReference>
<dbReference type="FunFam" id="3.30.1550.10:FF:000001">
    <property type="entry name" value="50S ribosomal protein L11"/>
    <property type="match status" value="1"/>
</dbReference>
<dbReference type="Gene3D" id="1.10.10.250">
    <property type="entry name" value="Ribosomal protein L11, C-terminal domain"/>
    <property type="match status" value="1"/>
</dbReference>
<dbReference type="Gene3D" id="3.30.1550.10">
    <property type="entry name" value="Ribosomal protein L11/L12, N-terminal domain"/>
    <property type="match status" value="1"/>
</dbReference>
<dbReference type="HAMAP" id="MF_00736">
    <property type="entry name" value="Ribosomal_uL11"/>
    <property type="match status" value="1"/>
</dbReference>
<dbReference type="InterPro" id="IPR000911">
    <property type="entry name" value="Ribosomal_uL11"/>
</dbReference>
<dbReference type="InterPro" id="IPR006519">
    <property type="entry name" value="Ribosomal_uL11_bac-typ"/>
</dbReference>
<dbReference type="InterPro" id="IPR020783">
    <property type="entry name" value="Ribosomal_uL11_C"/>
</dbReference>
<dbReference type="InterPro" id="IPR036769">
    <property type="entry name" value="Ribosomal_uL11_C_sf"/>
</dbReference>
<dbReference type="InterPro" id="IPR020785">
    <property type="entry name" value="Ribosomal_uL11_CS"/>
</dbReference>
<dbReference type="InterPro" id="IPR020784">
    <property type="entry name" value="Ribosomal_uL11_N"/>
</dbReference>
<dbReference type="InterPro" id="IPR036796">
    <property type="entry name" value="Ribosomal_uL11_N_sf"/>
</dbReference>
<dbReference type="NCBIfam" id="TIGR01632">
    <property type="entry name" value="L11_bact"/>
    <property type="match status" value="1"/>
</dbReference>
<dbReference type="PANTHER" id="PTHR11661">
    <property type="entry name" value="60S RIBOSOMAL PROTEIN L12"/>
    <property type="match status" value="1"/>
</dbReference>
<dbReference type="PANTHER" id="PTHR11661:SF1">
    <property type="entry name" value="LARGE RIBOSOMAL SUBUNIT PROTEIN UL11M"/>
    <property type="match status" value="1"/>
</dbReference>
<dbReference type="Pfam" id="PF00298">
    <property type="entry name" value="Ribosomal_L11"/>
    <property type="match status" value="1"/>
</dbReference>
<dbReference type="Pfam" id="PF03946">
    <property type="entry name" value="Ribosomal_L11_N"/>
    <property type="match status" value="1"/>
</dbReference>
<dbReference type="SMART" id="SM00649">
    <property type="entry name" value="RL11"/>
    <property type="match status" value="1"/>
</dbReference>
<dbReference type="SUPFAM" id="SSF54747">
    <property type="entry name" value="Ribosomal L11/L12e N-terminal domain"/>
    <property type="match status" value="1"/>
</dbReference>
<dbReference type="SUPFAM" id="SSF46906">
    <property type="entry name" value="Ribosomal protein L11, C-terminal domain"/>
    <property type="match status" value="1"/>
</dbReference>
<dbReference type="PROSITE" id="PS00359">
    <property type="entry name" value="RIBOSOMAL_L11"/>
    <property type="match status" value="1"/>
</dbReference>
<accession>A6W5S6</accession>
<proteinExistence type="inferred from homology"/>
<evidence type="ECO:0000255" key="1">
    <source>
        <dbReference type="HAMAP-Rule" id="MF_00736"/>
    </source>
</evidence>
<evidence type="ECO:0000305" key="2"/>
<gene>
    <name evidence="1" type="primary">rplK</name>
    <name type="ordered locus">Krad_0676</name>
</gene>
<sequence length="143" mass="15219">MPPKKKVAGLIKLQIKAGQATPAPPIGPALGQHGVNIMEFCKAYNAQTESQRGNVIPVEITVYEDRSFTFITKTPPAAELIKKAAGVEKGSGEPHVKKVANLTSAQVREIAEQKLQDLNAKDVDMAARIIAGTARSMGITVSD</sequence>